<reference key="1">
    <citation type="journal article" date="2000" name="Nature">
        <title>The genome sequence of the plant pathogen Xylella fastidiosa.</title>
        <authorList>
            <person name="Simpson A.J.G."/>
            <person name="Reinach F.C."/>
            <person name="Arruda P."/>
            <person name="Abreu F.A."/>
            <person name="Acencio M."/>
            <person name="Alvarenga R."/>
            <person name="Alves L.M.C."/>
            <person name="Araya J.E."/>
            <person name="Baia G.S."/>
            <person name="Baptista C.S."/>
            <person name="Barros M.H."/>
            <person name="Bonaccorsi E.D."/>
            <person name="Bordin S."/>
            <person name="Bove J.M."/>
            <person name="Briones M.R.S."/>
            <person name="Bueno M.R.P."/>
            <person name="Camargo A.A."/>
            <person name="Camargo L.E.A."/>
            <person name="Carraro D.M."/>
            <person name="Carrer H."/>
            <person name="Colauto N.B."/>
            <person name="Colombo C."/>
            <person name="Costa F.F."/>
            <person name="Costa M.C.R."/>
            <person name="Costa-Neto C.M."/>
            <person name="Coutinho L.L."/>
            <person name="Cristofani M."/>
            <person name="Dias-Neto E."/>
            <person name="Docena C."/>
            <person name="El-Dorry H."/>
            <person name="Facincani A.P."/>
            <person name="Ferreira A.J.S."/>
            <person name="Ferreira V.C.A."/>
            <person name="Ferro J.A."/>
            <person name="Fraga J.S."/>
            <person name="Franca S.C."/>
            <person name="Franco M.C."/>
            <person name="Frohme M."/>
            <person name="Furlan L.R."/>
            <person name="Garnier M."/>
            <person name="Goldman G.H."/>
            <person name="Goldman M.H.S."/>
            <person name="Gomes S.L."/>
            <person name="Gruber A."/>
            <person name="Ho P.L."/>
            <person name="Hoheisel J.D."/>
            <person name="Junqueira M.L."/>
            <person name="Kemper E.L."/>
            <person name="Kitajima J.P."/>
            <person name="Krieger J.E."/>
            <person name="Kuramae E.E."/>
            <person name="Laigret F."/>
            <person name="Lambais M.R."/>
            <person name="Leite L.C.C."/>
            <person name="Lemos E.G.M."/>
            <person name="Lemos M.V.F."/>
            <person name="Lopes S.A."/>
            <person name="Lopes C.R."/>
            <person name="Machado J.A."/>
            <person name="Machado M.A."/>
            <person name="Madeira A.M.B.N."/>
            <person name="Madeira H.M.F."/>
            <person name="Marino C.L."/>
            <person name="Marques M.V."/>
            <person name="Martins E.A.L."/>
            <person name="Martins E.M.F."/>
            <person name="Matsukuma A.Y."/>
            <person name="Menck C.F.M."/>
            <person name="Miracca E.C."/>
            <person name="Miyaki C.Y."/>
            <person name="Monteiro-Vitorello C.B."/>
            <person name="Moon D.H."/>
            <person name="Nagai M.A."/>
            <person name="Nascimento A.L.T.O."/>
            <person name="Netto L.E.S."/>
            <person name="Nhani A. Jr."/>
            <person name="Nobrega F.G."/>
            <person name="Nunes L.R."/>
            <person name="Oliveira M.A."/>
            <person name="de Oliveira M.C."/>
            <person name="de Oliveira R.C."/>
            <person name="Palmieri D.A."/>
            <person name="Paris A."/>
            <person name="Peixoto B.R."/>
            <person name="Pereira G.A.G."/>
            <person name="Pereira H.A. Jr."/>
            <person name="Pesquero J.B."/>
            <person name="Quaggio R.B."/>
            <person name="Roberto P.G."/>
            <person name="Rodrigues V."/>
            <person name="de Rosa A.J.M."/>
            <person name="de Rosa V.E. Jr."/>
            <person name="de Sa R.G."/>
            <person name="Santelli R.V."/>
            <person name="Sawasaki H.E."/>
            <person name="da Silva A.C.R."/>
            <person name="da Silva A.M."/>
            <person name="da Silva F.R."/>
            <person name="Silva W.A. Jr."/>
            <person name="da Silveira J.F."/>
            <person name="Silvestri M.L.Z."/>
            <person name="Siqueira W.J."/>
            <person name="de Souza A.A."/>
            <person name="de Souza A.P."/>
            <person name="Terenzi M.F."/>
            <person name="Truffi D."/>
            <person name="Tsai S.M."/>
            <person name="Tsuhako M.H."/>
            <person name="Vallada H."/>
            <person name="Van Sluys M.A."/>
            <person name="Verjovski-Almeida S."/>
            <person name="Vettore A.L."/>
            <person name="Zago M.A."/>
            <person name="Zatz M."/>
            <person name="Meidanis J."/>
            <person name="Setubal J.C."/>
        </authorList>
    </citation>
    <scope>NUCLEOTIDE SEQUENCE [LARGE SCALE GENOMIC DNA]</scope>
    <source>
        <strain>9a5c</strain>
    </source>
</reference>
<comment type="function">
    <text evidence="1">Component of the acetyl coenzyme A carboxylase (ACC) complex. First, biotin carboxylase catalyzes the carboxylation of biotin on its carrier protein (BCCP) and then the CO(2) group is transferred by the carboxyltransferase to acetyl-CoA to form malonyl-CoA.</text>
</comment>
<comment type="catalytic activity">
    <reaction evidence="1">
        <text>N(6)-carboxybiotinyl-L-lysyl-[protein] + acetyl-CoA = N(6)-biotinyl-L-lysyl-[protein] + malonyl-CoA</text>
        <dbReference type="Rhea" id="RHEA:54728"/>
        <dbReference type="Rhea" id="RHEA-COMP:10505"/>
        <dbReference type="Rhea" id="RHEA-COMP:10506"/>
        <dbReference type="ChEBI" id="CHEBI:57288"/>
        <dbReference type="ChEBI" id="CHEBI:57384"/>
        <dbReference type="ChEBI" id="CHEBI:83144"/>
        <dbReference type="ChEBI" id="CHEBI:83145"/>
        <dbReference type="EC" id="2.1.3.15"/>
    </reaction>
</comment>
<comment type="pathway">
    <text evidence="1">Lipid metabolism; malonyl-CoA biosynthesis; malonyl-CoA from acetyl-CoA: step 1/1.</text>
</comment>
<comment type="subunit">
    <text evidence="1">Acetyl-CoA carboxylase is a heterohexamer composed of biotin carboxyl carrier protein (AccB), biotin carboxylase (AccC) and two subunits each of ACCase subunit alpha (AccA) and ACCase subunit beta (AccD).</text>
</comment>
<comment type="subcellular location">
    <subcellularLocation>
        <location evidence="1">Cytoplasm</location>
    </subcellularLocation>
</comment>
<comment type="similarity">
    <text evidence="1">Belongs to the AccA family.</text>
</comment>
<gene>
    <name evidence="1" type="primary">accA</name>
    <name type="ordered locus">XF_0203</name>
</gene>
<accession>Q9PGU5</accession>
<name>ACCA_XYLFA</name>
<proteinExistence type="inferred from homology"/>
<evidence type="ECO:0000255" key="1">
    <source>
        <dbReference type="HAMAP-Rule" id="MF_00823"/>
    </source>
</evidence>
<evidence type="ECO:0000255" key="2">
    <source>
        <dbReference type="PROSITE-ProRule" id="PRU01137"/>
    </source>
</evidence>
<protein>
    <recommendedName>
        <fullName evidence="1">Acetyl-coenzyme A carboxylase carboxyl transferase subunit alpha</fullName>
        <shortName evidence="1">ACCase subunit alpha</shortName>
        <shortName evidence="1">Acetyl-CoA carboxylase carboxyltransferase subunit alpha</shortName>
        <ecNumber evidence="1">2.1.3.15</ecNumber>
    </recommendedName>
</protein>
<sequence>MNPNYLDFEQPIADLEAKIQELHTASMGPSINVDTEVRALENKLRLRTAQIFRNLSAWQISQLARHPRRPYTLDYISVVCDEFQELAGDRALADDKAIVGGLARIGHRPVMLIGHQKGRDNKERLMRNFGMPKPEGYRKALRLMKLAERFGLPLLTFIDTMGAWPGIDAEERNQSEAIATNLIEMAELKIPVICTVIGEGGSGGALAIGIGDRTLMLEYSTYSVITPEGCASILWKDAAKASDAAEQLNLTARRLKEFGLIDKVIREPIGGAHRNPQQMANRLKAVLLNELEALDKVPLVTLLNQRHKRLRTYGAYENH</sequence>
<feature type="chain" id="PRO_0000223859" description="Acetyl-coenzyme A carboxylase carboxyl transferase subunit alpha">
    <location>
        <begin position="1"/>
        <end position="319"/>
    </location>
</feature>
<feature type="domain" description="CoA carboxyltransferase C-terminal" evidence="2">
    <location>
        <begin position="32"/>
        <end position="293"/>
    </location>
</feature>
<organism>
    <name type="scientific">Xylella fastidiosa (strain 9a5c)</name>
    <dbReference type="NCBI Taxonomy" id="160492"/>
    <lineage>
        <taxon>Bacteria</taxon>
        <taxon>Pseudomonadati</taxon>
        <taxon>Pseudomonadota</taxon>
        <taxon>Gammaproteobacteria</taxon>
        <taxon>Lysobacterales</taxon>
        <taxon>Lysobacteraceae</taxon>
        <taxon>Xylella</taxon>
    </lineage>
</organism>
<dbReference type="EC" id="2.1.3.15" evidence="1"/>
<dbReference type="EMBL" id="AE003849">
    <property type="protein sequence ID" value="AAF83016.1"/>
    <property type="molecule type" value="Genomic_DNA"/>
</dbReference>
<dbReference type="PIR" id="H82836">
    <property type="entry name" value="H82836"/>
</dbReference>
<dbReference type="RefSeq" id="WP_010892744.1">
    <property type="nucleotide sequence ID" value="NC_002488.3"/>
</dbReference>
<dbReference type="SMR" id="Q9PGU5"/>
<dbReference type="STRING" id="160492.XF_0203"/>
<dbReference type="KEGG" id="xfa:XF_0203"/>
<dbReference type="eggNOG" id="COG0825">
    <property type="taxonomic scope" value="Bacteria"/>
</dbReference>
<dbReference type="HOGENOM" id="CLU_015486_0_2_6"/>
<dbReference type="UniPathway" id="UPA00655">
    <property type="reaction ID" value="UER00711"/>
</dbReference>
<dbReference type="Proteomes" id="UP000000812">
    <property type="component" value="Chromosome"/>
</dbReference>
<dbReference type="GO" id="GO:0009317">
    <property type="term" value="C:acetyl-CoA carboxylase complex"/>
    <property type="evidence" value="ECO:0007669"/>
    <property type="project" value="InterPro"/>
</dbReference>
<dbReference type="GO" id="GO:0003989">
    <property type="term" value="F:acetyl-CoA carboxylase activity"/>
    <property type="evidence" value="ECO:0007669"/>
    <property type="project" value="InterPro"/>
</dbReference>
<dbReference type="GO" id="GO:0005524">
    <property type="term" value="F:ATP binding"/>
    <property type="evidence" value="ECO:0007669"/>
    <property type="project" value="UniProtKB-KW"/>
</dbReference>
<dbReference type="GO" id="GO:0016743">
    <property type="term" value="F:carboxyl- or carbamoyltransferase activity"/>
    <property type="evidence" value="ECO:0007669"/>
    <property type="project" value="UniProtKB-UniRule"/>
</dbReference>
<dbReference type="GO" id="GO:0006633">
    <property type="term" value="P:fatty acid biosynthetic process"/>
    <property type="evidence" value="ECO:0007669"/>
    <property type="project" value="UniProtKB-KW"/>
</dbReference>
<dbReference type="GO" id="GO:2001295">
    <property type="term" value="P:malonyl-CoA biosynthetic process"/>
    <property type="evidence" value="ECO:0007669"/>
    <property type="project" value="UniProtKB-UniRule"/>
</dbReference>
<dbReference type="Gene3D" id="3.90.226.10">
    <property type="entry name" value="2-enoyl-CoA Hydratase, Chain A, domain 1"/>
    <property type="match status" value="1"/>
</dbReference>
<dbReference type="HAMAP" id="MF_00823">
    <property type="entry name" value="AcetylCoA_CT_alpha"/>
    <property type="match status" value="1"/>
</dbReference>
<dbReference type="InterPro" id="IPR001095">
    <property type="entry name" value="Acetyl_CoA_COase_a_su"/>
</dbReference>
<dbReference type="InterPro" id="IPR029045">
    <property type="entry name" value="ClpP/crotonase-like_dom_sf"/>
</dbReference>
<dbReference type="InterPro" id="IPR011763">
    <property type="entry name" value="COA_CT_C"/>
</dbReference>
<dbReference type="NCBIfam" id="TIGR00513">
    <property type="entry name" value="accA"/>
    <property type="match status" value="1"/>
</dbReference>
<dbReference type="NCBIfam" id="NF041504">
    <property type="entry name" value="AccA_sub"/>
    <property type="match status" value="1"/>
</dbReference>
<dbReference type="NCBIfam" id="NF004344">
    <property type="entry name" value="PRK05724.1"/>
    <property type="match status" value="1"/>
</dbReference>
<dbReference type="PANTHER" id="PTHR42853">
    <property type="entry name" value="ACETYL-COENZYME A CARBOXYLASE CARBOXYL TRANSFERASE SUBUNIT ALPHA"/>
    <property type="match status" value="1"/>
</dbReference>
<dbReference type="PANTHER" id="PTHR42853:SF3">
    <property type="entry name" value="ACETYL-COENZYME A CARBOXYLASE CARBOXYL TRANSFERASE SUBUNIT ALPHA, CHLOROPLASTIC"/>
    <property type="match status" value="1"/>
</dbReference>
<dbReference type="Pfam" id="PF03255">
    <property type="entry name" value="ACCA"/>
    <property type="match status" value="1"/>
</dbReference>
<dbReference type="PRINTS" id="PR01069">
    <property type="entry name" value="ACCCTRFRASEA"/>
</dbReference>
<dbReference type="SUPFAM" id="SSF52096">
    <property type="entry name" value="ClpP/crotonase"/>
    <property type="match status" value="1"/>
</dbReference>
<dbReference type="PROSITE" id="PS50989">
    <property type="entry name" value="COA_CT_CTER"/>
    <property type="match status" value="1"/>
</dbReference>
<keyword id="KW-0067">ATP-binding</keyword>
<keyword id="KW-0963">Cytoplasm</keyword>
<keyword id="KW-0275">Fatty acid biosynthesis</keyword>
<keyword id="KW-0276">Fatty acid metabolism</keyword>
<keyword id="KW-0444">Lipid biosynthesis</keyword>
<keyword id="KW-0443">Lipid metabolism</keyword>
<keyword id="KW-0547">Nucleotide-binding</keyword>
<keyword id="KW-0808">Transferase</keyword>